<protein>
    <recommendedName>
        <fullName evidence="1">4-hydroxy-3-methylbut-2-enyl diphosphate reductase 1</fullName>
        <shortName evidence="1">HMBPP reductase 1</shortName>
        <ecNumber evidence="1">1.17.7.4</ecNumber>
    </recommendedName>
</protein>
<dbReference type="EC" id="1.17.7.4" evidence="1"/>
<dbReference type="EMBL" id="BX571965">
    <property type="protein sequence ID" value="CAH34913.1"/>
    <property type="molecule type" value="Genomic_DNA"/>
</dbReference>
<dbReference type="RefSeq" id="WP_004186453.1">
    <property type="nucleotide sequence ID" value="NZ_CP009538.1"/>
</dbReference>
<dbReference type="RefSeq" id="YP_107546.1">
    <property type="nucleotide sequence ID" value="NC_006350.1"/>
</dbReference>
<dbReference type="SMR" id="Q63WH0"/>
<dbReference type="STRING" id="272560.BPSL0919"/>
<dbReference type="GeneID" id="92979926"/>
<dbReference type="KEGG" id="bps:BPSL0919"/>
<dbReference type="PATRIC" id="fig|272560.51.peg.662"/>
<dbReference type="eggNOG" id="COG0761">
    <property type="taxonomic scope" value="Bacteria"/>
</dbReference>
<dbReference type="UniPathway" id="UPA00056">
    <property type="reaction ID" value="UER00097"/>
</dbReference>
<dbReference type="UniPathway" id="UPA00059">
    <property type="reaction ID" value="UER00105"/>
</dbReference>
<dbReference type="Proteomes" id="UP000000605">
    <property type="component" value="Chromosome 1"/>
</dbReference>
<dbReference type="GO" id="GO:0051539">
    <property type="term" value="F:4 iron, 4 sulfur cluster binding"/>
    <property type="evidence" value="ECO:0007669"/>
    <property type="project" value="UniProtKB-UniRule"/>
</dbReference>
<dbReference type="GO" id="GO:0051745">
    <property type="term" value="F:4-hydroxy-3-methylbut-2-enyl diphosphate reductase activity"/>
    <property type="evidence" value="ECO:0007669"/>
    <property type="project" value="UniProtKB-UniRule"/>
</dbReference>
<dbReference type="GO" id="GO:0046872">
    <property type="term" value="F:metal ion binding"/>
    <property type="evidence" value="ECO:0007669"/>
    <property type="project" value="UniProtKB-KW"/>
</dbReference>
<dbReference type="GO" id="GO:0050992">
    <property type="term" value="P:dimethylallyl diphosphate biosynthetic process"/>
    <property type="evidence" value="ECO:0007669"/>
    <property type="project" value="UniProtKB-UniRule"/>
</dbReference>
<dbReference type="GO" id="GO:0019288">
    <property type="term" value="P:isopentenyl diphosphate biosynthetic process, methylerythritol 4-phosphate pathway"/>
    <property type="evidence" value="ECO:0007669"/>
    <property type="project" value="UniProtKB-UniRule"/>
</dbReference>
<dbReference type="GO" id="GO:0016114">
    <property type="term" value="P:terpenoid biosynthetic process"/>
    <property type="evidence" value="ECO:0007669"/>
    <property type="project" value="UniProtKB-UniRule"/>
</dbReference>
<dbReference type="CDD" id="cd13944">
    <property type="entry name" value="lytB_ispH"/>
    <property type="match status" value="1"/>
</dbReference>
<dbReference type="Gene3D" id="3.40.50.11270">
    <property type="match status" value="1"/>
</dbReference>
<dbReference type="Gene3D" id="3.40.1010.20">
    <property type="entry name" value="4-hydroxy-3-methylbut-2-enyl diphosphate reductase, catalytic domain"/>
    <property type="match status" value="2"/>
</dbReference>
<dbReference type="HAMAP" id="MF_00191">
    <property type="entry name" value="IspH"/>
    <property type="match status" value="1"/>
</dbReference>
<dbReference type="InterPro" id="IPR003451">
    <property type="entry name" value="LytB/IspH"/>
</dbReference>
<dbReference type="NCBIfam" id="TIGR00216">
    <property type="entry name" value="ispH_lytB"/>
    <property type="match status" value="1"/>
</dbReference>
<dbReference type="NCBIfam" id="NF002188">
    <property type="entry name" value="PRK01045.1-2"/>
    <property type="match status" value="1"/>
</dbReference>
<dbReference type="NCBIfam" id="NF002190">
    <property type="entry name" value="PRK01045.1-4"/>
    <property type="match status" value="1"/>
</dbReference>
<dbReference type="PANTHER" id="PTHR30426">
    <property type="entry name" value="4-HYDROXY-3-METHYLBUT-2-ENYL DIPHOSPHATE REDUCTASE"/>
    <property type="match status" value="1"/>
</dbReference>
<dbReference type="PANTHER" id="PTHR30426:SF0">
    <property type="entry name" value="4-HYDROXY-3-METHYLBUT-2-ENYL DIPHOSPHATE REDUCTASE"/>
    <property type="match status" value="1"/>
</dbReference>
<dbReference type="Pfam" id="PF02401">
    <property type="entry name" value="LYTB"/>
    <property type="match status" value="1"/>
</dbReference>
<keyword id="KW-0004">4Fe-4S</keyword>
<keyword id="KW-0408">Iron</keyword>
<keyword id="KW-0411">Iron-sulfur</keyword>
<keyword id="KW-0414">Isoprene biosynthesis</keyword>
<keyword id="KW-0479">Metal-binding</keyword>
<keyword id="KW-0560">Oxidoreductase</keyword>
<keyword id="KW-1185">Reference proteome</keyword>
<feature type="chain" id="PRO_0000128793" description="4-hydroxy-3-methylbut-2-enyl diphosphate reductase 1">
    <location>
        <begin position="1"/>
        <end position="326"/>
    </location>
</feature>
<feature type="active site" description="Proton donor" evidence="1">
    <location>
        <position position="141"/>
    </location>
</feature>
<feature type="binding site" evidence="1">
    <location>
        <position position="27"/>
    </location>
    <ligand>
        <name>[4Fe-4S] cluster</name>
        <dbReference type="ChEBI" id="CHEBI:49883"/>
    </ligand>
</feature>
<feature type="binding site" evidence="1">
    <location>
        <position position="56"/>
    </location>
    <ligand>
        <name>(2E)-4-hydroxy-3-methylbut-2-enyl diphosphate</name>
        <dbReference type="ChEBI" id="CHEBI:128753"/>
    </ligand>
</feature>
<feature type="binding site" evidence="1">
    <location>
        <position position="56"/>
    </location>
    <ligand>
        <name>dimethylallyl diphosphate</name>
        <dbReference type="ChEBI" id="CHEBI:57623"/>
    </ligand>
</feature>
<feature type="binding site" evidence="1">
    <location>
        <position position="56"/>
    </location>
    <ligand>
        <name>isopentenyl diphosphate</name>
        <dbReference type="ChEBI" id="CHEBI:128769"/>
    </ligand>
</feature>
<feature type="binding site" evidence="1">
    <location>
        <position position="89"/>
    </location>
    <ligand>
        <name>(2E)-4-hydroxy-3-methylbut-2-enyl diphosphate</name>
        <dbReference type="ChEBI" id="CHEBI:128753"/>
    </ligand>
</feature>
<feature type="binding site" evidence="1">
    <location>
        <position position="89"/>
    </location>
    <ligand>
        <name>dimethylallyl diphosphate</name>
        <dbReference type="ChEBI" id="CHEBI:57623"/>
    </ligand>
</feature>
<feature type="binding site" evidence="1">
    <location>
        <position position="89"/>
    </location>
    <ligand>
        <name>isopentenyl diphosphate</name>
        <dbReference type="ChEBI" id="CHEBI:128769"/>
    </ligand>
</feature>
<feature type="binding site" evidence="1">
    <location>
        <position position="111"/>
    </location>
    <ligand>
        <name>[4Fe-4S] cluster</name>
        <dbReference type="ChEBI" id="CHEBI:49883"/>
    </ligand>
</feature>
<feature type="binding site" evidence="1">
    <location>
        <position position="139"/>
    </location>
    <ligand>
        <name>(2E)-4-hydroxy-3-methylbut-2-enyl diphosphate</name>
        <dbReference type="ChEBI" id="CHEBI:128753"/>
    </ligand>
</feature>
<feature type="binding site" evidence="1">
    <location>
        <position position="139"/>
    </location>
    <ligand>
        <name>dimethylallyl diphosphate</name>
        <dbReference type="ChEBI" id="CHEBI:57623"/>
    </ligand>
</feature>
<feature type="binding site" evidence="1">
    <location>
        <position position="139"/>
    </location>
    <ligand>
        <name>isopentenyl diphosphate</name>
        <dbReference type="ChEBI" id="CHEBI:128769"/>
    </ligand>
</feature>
<feature type="binding site" evidence="1">
    <location>
        <position position="179"/>
    </location>
    <ligand>
        <name>(2E)-4-hydroxy-3-methylbut-2-enyl diphosphate</name>
        <dbReference type="ChEBI" id="CHEBI:128753"/>
    </ligand>
</feature>
<feature type="binding site" evidence="1">
    <location>
        <position position="209"/>
    </location>
    <ligand>
        <name>[4Fe-4S] cluster</name>
        <dbReference type="ChEBI" id="CHEBI:49883"/>
    </ligand>
</feature>
<feature type="binding site" evidence="1">
    <location>
        <position position="237"/>
    </location>
    <ligand>
        <name>(2E)-4-hydroxy-3-methylbut-2-enyl diphosphate</name>
        <dbReference type="ChEBI" id="CHEBI:128753"/>
    </ligand>
</feature>
<feature type="binding site" evidence="1">
    <location>
        <position position="237"/>
    </location>
    <ligand>
        <name>dimethylallyl diphosphate</name>
        <dbReference type="ChEBI" id="CHEBI:57623"/>
    </ligand>
</feature>
<feature type="binding site" evidence="1">
    <location>
        <position position="237"/>
    </location>
    <ligand>
        <name>isopentenyl diphosphate</name>
        <dbReference type="ChEBI" id="CHEBI:128769"/>
    </ligand>
</feature>
<feature type="binding site" evidence="1">
    <location>
        <position position="238"/>
    </location>
    <ligand>
        <name>(2E)-4-hydroxy-3-methylbut-2-enyl diphosphate</name>
        <dbReference type="ChEBI" id="CHEBI:128753"/>
    </ligand>
</feature>
<feature type="binding site" evidence="1">
    <location>
        <position position="238"/>
    </location>
    <ligand>
        <name>dimethylallyl diphosphate</name>
        <dbReference type="ChEBI" id="CHEBI:57623"/>
    </ligand>
</feature>
<feature type="binding site" evidence="1">
    <location>
        <position position="238"/>
    </location>
    <ligand>
        <name>isopentenyl diphosphate</name>
        <dbReference type="ChEBI" id="CHEBI:128769"/>
    </ligand>
</feature>
<feature type="binding site" evidence="1">
    <location>
        <position position="239"/>
    </location>
    <ligand>
        <name>(2E)-4-hydroxy-3-methylbut-2-enyl diphosphate</name>
        <dbReference type="ChEBI" id="CHEBI:128753"/>
    </ligand>
</feature>
<feature type="binding site" evidence="1">
    <location>
        <position position="239"/>
    </location>
    <ligand>
        <name>dimethylallyl diphosphate</name>
        <dbReference type="ChEBI" id="CHEBI:57623"/>
    </ligand>
</feature>
<feature type="binding site" evidence="1">
    <location>
        <position position="239"/>
    </location>
    <ligand>
        <name>isopentenyl diphosphate</name>
        <dbReference type="ChEBI" id="CHEBI:128769"/>
    </ligand>
</feature>
<feature type="binding site" evidence="1">
    <location>
        <position position="281"/>
    </location>
    <ligand>
        <name>(2E)-4-hydroxy-3-methylbut-2-enyl diphosphate</name>
        <dbReference type="ChEBI" id="CHEBI:128753"/>
    </ligand>
</feature>
<feature type="binding site" evidence="1">
    <location>
        <position position="281"/>
    </location>
    <ligand>
        <name>dimethylallyl diphosphate</name>
        <dbReference type="ChEBI" id="CHEBI:57623"/>
    </ligand>
</feature>
<feature type="binding site" evidence="1">
    <location>
        <position position="281"/>
    </location>
    <ligand>
        <name>isopentenyl diphosphate</name>
        <dbReference type="ChEBI" id="CHEBI:128769"/>
    </ligand>
</feature>
<accession>Q63WH0</accession>
<evidence type="ECO:0000255" key="1">
    <source>
        <dbReference type="HAMAP-Rule" id="MF_00191"/>
    </source>
</evidence>
<proteinExistence type="inferred from homology"/>
<comment type="function">
    <text evidence="1">Catalyzes the conversion of 1-hydroxy-2-methyl-2-(E)-butenyl 4-diphosphate (HMBPP) into a mixture of isopentenyl diphosphate (IPP) and dimethylallyl diphosphate (DMAPP). Acts in the terminal step of the DOXP/MEP pathway for isoprenoid precursor biosynthesis.</text>
</comment>
<comment type="catalytic activity">
    <reaction evidence="1">
        <text>isopentenyl diphosphate + 2 oxidized [2Fe-2S]-[ferredoxin] + H2O = (2E)-4-hydroxy-3-methylbut-2-enyl diphosphate + 2 reduced [2Fe-2S]-[ferredoxin] + 2 H(+)</text>
        <dbReference type="Rhea" id="RHEA:24488"/>
        <dbReference type="Rhea" id="RHEA-COMP:10000"/>
        <dbReference type="Rhea" id="RHEA-COMP:10001"/>
        <dbReference type="ChEBI" id="CHEBI:15377"/>
        <dbReference type="ChEBI" id="CHEBI:15378"/>
        <dbReference type="ChEBI" id="CHEBI:33737"/>
        <dbReference type="ChEBI" id="CHEBI:33738"/>
        <dbReference type="ChEBI" id="CHEBI:128753"/>
        <dbReference type="ChEBI" id="CHEBI:128769"/>
        <dbReference type="EC" id="1.17.7.4"/>
    </reaction>
</comment>
<comment type="catalytic activity">
    <reaction evidence="1">
        <text>dimethylallyl diphosphate + 2 oxidized [2Fe-2S]-[ferredoxin] + H2O = (2E)-4-hydroxy-3-methylbut-2-enyl diphosphate + 2 reduced [2Fe-2S]-[ferredoxin] + 2 H(+)</text>
        <dbReference type="Rhea" id="RHEA:24825"/>
        <dbReference type="Rhea" id="RHEA-COMP:10000"/>
        <dbReference type="Rhea" id="RHEA-COMP:10001"/>
        <dbReference type="ChEBI" id="CHEBI:15377"/>
        <dbReference type="ChEBI" id="CHEBI:15378"/>
        <dbReference type="ChEBI" id="CHEBI:33737"/>
        <dbReference type="ChEBI" id="CHEBI:33738"/>
        <dbReference type="ChEBI" id="CHEBI:57623"/>
        <dbReference type="ChEBI" id="CHEBI:128753"/>
        <dbReference type="EC" id="1.17.7.4"/>
    </reaction>
</comment>
<comment type="cofactor">
    <cofactor evidence="1">
        <name>[4Fe-4S] cluster</name>
        <dbReference type="ChEBI" id="CHEBI:49883"/>
    </cofactor>
    <text evidence="1">Binds 1 [4Fe-4S] cluster per subunit.</text>
</comment>
<comment type="pathway">
    <text evidence="1">Isoprenoid biosynthesis; dimethylallyl diphosphate biosynthesis; dimethylallyl diphosphate from (2E)-4-hydroxy-3-methylbutenyl diphosphate: step 1/1.</text>
</comment>
<comment type="pathway">
    <text evidence="1">Isoprenoid biosynthesis; isopentenyl diphosphate biosynthesis via DXP pathway; isopentenyl diphosphate from 1-deoxy-D-xylulose 5-phosphate: step 6/6.</text>
</comment>
<comment type="similarity">
    <text evidence="1">Belongs to the IspH family.</text>
</comment>
<gene>
    <name evidence="1" type="primary">ispH1</name>
    <name type="synonym">lytB</name>
    <name type="ordered locus">BPSL0919</name>
</gene>
<name>ISPH1_BURPS</name>
<sequence length="326" mass="35162">MSSTDTLSGQVAAADAEILLAQPRGFCAGVDRAIEIVERAIAMHGAPIYVRHEIVHNKYVVEDLKKKGAIFVEELEEVPSGNTVIFSAHGVSKAVRDEAAVRGLRIYDATCPLVTKVHVEVAKMRQEGVDIVMIGHKGHPEVEGTMGQVERGMHLVESVEDVRRLELPDPERVALVTQTTLSVDDAAEIIGALKAKFPAIREPKKQDICYATQNRQDAVKFMAPQCDVVIVVGSPNSSNSSRLREVAEKRGVAAYMVDAPEQIDPAWVAGKRRIGVTAGASAPEVLAQAVIARLRELGVTNVRALEGIEENVSFPLPRGLNLSSAA</sequence>
<organism>
    <name type="scientific">Burkholderia pseudomallei (strain K96243)</name>
    <dbReference type="NCBI Taxonomy" id="272560"/>
    <lineage>
        <taxon>Bacteria</taxon>
        <taxon>Pseudomonadati</taxon>
        <taxon>Pseudomonadota</taxon>
        <taxon>Betaproteobacteria</taxon>
        <taxon>Burkholderiales</taxon>
        <taxon>Burkholderiaceae</taxon>
        <taxon>Burkholderia</taxon>
        <taxon>pseudomallei group</taxon>
    </lineage>
</organism>
<reference key="1">
    <citation type="journal article" date="2004" name="Proc. Natl. Acad. Sci. U.S.A.">
        <title>Genomic plasticity of the causative agent of melioidosis, Burkholderia pseudomallei.</title>
        <authorList>
            <person name="Holden M.T.G."/>
            <person name="Titball R.W."/>
            <person name="Peacock S.J."/>
            <person name="Cerdeno-Tarraga A.-M."/>
            <person name="Atkins T."/>
            <person name="Crossman L.C."/>
            <person name="Pitt T."/>
            <person name="Churcher C."/>
            <person name="Mungall K.L."/>
            <person name="Bentley S.D."/>
            <person name="Sebaihia M."/>
            <person name="Thomson N.R."/>
            <person name="Bason N."/>
            <person name="Beacham I.R."/>
            <person name="Brooks K."/>
            <person name="Brown K.A."/>
            <person name="Brown N.F."/>
            <person name="Challis G.L."/>
            <person name="Cherevach I."/>
            <person name="Chillingworth T."/>
            <person name="Cronin A."/>
            <person name="Crossett B."/>
            <person name="Davis P."/>
            <person name="DeShazer D."/>
            <person name="Feltwell T."/>
            <person name="Fraser A."/>
            <person name="Hance Z."/>
            <person name="Hauser H."/>
            <person name="Holroyd S."/>
            <person name="Jagels K."/>
            <person name="Keith K.E."/>
            <person name="Maddison M."/>
            <person name="Moule S."/>
            <person name="Price C."/>
            <person name="Quail M.A."/>
            <person name="Rabbinowitsch E."/>
            <person name="Rutherford K."/>
            <person name="Sanders M."/>
            <person name="Simmonds M."/>
            <person name="Songsivilai S."/>
            <person name="Stevens K."/>
            <person name="Tumapa S."/>
            <person name="Vesaratchavest M."/>
            <person name="Whitehead S."/>
            <person name="Yeats C."/>
            <person name="Barrell B.G."/>
            <person name="Oyston P.C.F."/>
            <person name="Parkhill J."/>
        </authorList>
    </citation>
    <scope>NUCLEOTIDE SEQUENCE [LARGE SCALE GENOMIC DNA]</scope>
    <source>
        <strain>K96243</strain>
    </source>
</reference>